<proteinExistence type="inferred from homology"/>
<evidence type="ECO:0000255" key="1">
    <source>
        <dbReference type="HAMAP-Rule" id="MF_01455"/>
    </source>
</evidence>
<name>YMGG_SHIF8</name>
<comment type="similarity">
    <text evidence="1">Belongs to the UPF0757 family.</text>
</comment>
<accession>Q0T5N1</accession>
<dbReference type="EMBL" id="CP000266">
    <property type="protein sequence ID" value="ABF03384.1"/>
    <property type="molecule type" value="Genomic_DNA"/>
</dbReference>
<dbReference type="RefSeq" id="WP_000726974.1">
    <property type="nucleotide sequence ID" value="NC_008258.1"/>
</dbReference>
<dbReference type="KEGG" id="sfv:SFV_1176"/>
<dbReference type="HOGENOM" id="CLU_164687_0_0_6"/>
<dbReference type="Proteomes" id="UP000000659">
    <property type="component" value="Chromosome"/>
</dbReference>
<dbReference type="HAMAP" id="MF_01455">
    <property type="entry name" value="UPF0757"/>
    <property type="match status" value="1"/>
</dbReference>
<dbReference type="InterPro" id="IPR025693">
    <property type="entry name" value="Gly-zipper_OmpA-like_dom"/>
</dbReference>
<dbReference type="InterPro" id="IPR027367">
    <property type="entry name" value="Gly-zipper_YMGG"/>
</dbReference>
<dbReference type="InterPro" id="IPR022833">
    <property type="entry name" value="UPF0757_YmgG"/>
</dbReference>
<dbReference type="Pfam" id="PF13436">
    <property type="entry name" value="Gly-zipper_OmpA"/>
    <property type="match status" value="1"/>
</dbReference>
<dbReference type="Pfam" id="PF13441">
    <property type="entry name" value="Gly-zipper_YMGG"/>
    <property type="match status" value="1"/>
</dbReference>
<organism>
    <name type="scientific">Shigella flexneri serotype 5b (strain 8401)</name>
    <dbReference type="NCBI Taxonomy" id="373384"/>
    <lineage>
        <taxon>Bacteria</taxon>
        <taxon>Pseudomonadati</taxon>
        <taxon>Pseudomonadota</taxon>
        <taxon>Gammaproteobacteria</taxon>
        <taxon>Enterobacterales</taxon>
        <taxon>Enterobacteriaceae</taxon>
        <taxon>Shigella</taxon>
    </lineage>
</organism>
<sequence length="114" mass="10807">MKKKILAFGLISALFCSTPAMADMNRTTKGALLGAGVGLLTGNGVNGVLKGAAVGAGVGAVTEKGRDGKNARKGAKVGAAVGAVTGVLTGNGLEGAIKGAVIGGTGGAILGKMK</sequence>
<reference key="1">
    <citation type="journal article" date="2006" name="BMC Genomics">
        <title>Complete genome sequence of Shigella flexneri 5b and comparison with Shigella flexneri 2a.</title>
        <authorList>
            <person name="Nie H."/>
            <person name="Yang F."/>
            <person name="Zhang X."/>
            <person name="Yang J."/>
            <person name="Chen L."/>
            <person name="Wang J."/>
            <person name="Xiong Z."/>
            <person name="Peng J."/>
            <person name="Sun L."/>
            <person name="Dong J."/>
            <person name="Xue Y."/>
            <person name="Xu X."/>
            <person name="Chen S."/>
            <person name="Yao Z."/>
            <person name="Shen Y."/>
            <person name="Jin Q."/>
        </authorList>
    </citation>
    <scope>NUCLEOTIDE SEQUENCE [LARGE SCALE GENOMIC DNA]</scope>
    <source>
        <strain>8401</strain>
    </source>
</reference>
<gene>
    <name evidence="1" type="primary">ymgG</name>
    <name type="ordered locus">SFV_1176</name>
</gene>
<feature type="chain" id="PRO_0000388965" description="UPF0757 protein YmgG">
    <location>
        <begin position="1"/>
        <end position="114"/>
    </location>
</feature>
<protein>
    <recommendedName>
        <fullName evidence="1">UPF0757 protein YmgG</fullName>
    </recommendedName>
</protein>